<organism>
    <name type="scientific">Bradyrhizobium diazoefficiens (strain JCM 10833 / BCRC 13528 / IAM 13628 / NBRC 14792 / USDA 110)</name>
    <dbReference type="NCBI Taxonomy" id="224911"/>
    <lineage>
        <taxon>Bacteria</taxon>
        <taxon>Pseudomonadati</taxon>
        <taxon>Pseudomonadota</taxon>
        <taxon>Alphaproteobacteria</taxon>
        <taxon>Hyphomicrobiales</taxon>
        <taxon>Nitrobacteraceae</taxon>
        <taxon>Bradyrhizobium</taxon>
    </lineage>
</organism>
<evidence type="ECO:0000255" key="1">
    <source>
        <dbReference type="HAMAP-Rule" id="MF_01300"/>
    </source>
</evidence>
<comment type="function">
    <text evidence="1">Responsible for the transport of dicarboxylates such as succinate, fumarate, and malate from the periplasm across the membrane.</text>
</comment>
<comment type="subcellular location">
    <subcellularLocation>
        <location evidence="1">Cell inner membrane</location>
        <topology evidence="1">Multi-pass membrane protein</topology>
    </subcellularLocation>
</comment>
<comment type="similarity">
    <text evidence="1">Belongs to the dicarboxylate/amino acid:cation symporter (DAACS) (TC 2.A.23) family.</text>
</comment>
<gene>
    <name evidence="1" type="primary">dctA2</name>
    <name type="ordered locus">blr3723</name>
</gene>
<keyword id="KW-0997">Cell inner membrane</keyword>
<keyword id="KW-1003">Cell membrane</keyword>
<keyword id="KW-0472">Membrane</keyword>
<keyword id="KW-1185">Reference proteome</keyword>
<keyword id="KW-0769">Symport</keyword>
<keyword id="KW-0812">Transmembrane</keyword>
<keyword id="KW-1133">Transmembrane helix</keyword>
<keyword id="KW-0813">Transport</keyword>
<feature type="chain" id="PRO_0000321970" description="C4-dicarboxylate transport protein 2">
    <location>
        <begin position="1"/>
        <end position="444"/>
    </location>
</feature>
<feature type="transmembrane region" description="Helical" evidence="1">
    <location>
        <begin position="23"/>
        <end position="43"/>
    </location>
</feature>
<feature type="transmembrane region" description="Helical" evidence="1">
    <location>
        <begin position="61"/>
        <end position="81"/>
    </location>
</feature>
<feature type="transmembrane region" description="Helical" evidence="1">
    <location>
        <begin position="95"/>
        <end position="115"/>
    </location>
</feature>
<feature type="transmembrane region" description="Helical" evidence="1">
    <location>
        <begin position="162"/>
        <end position="182"/>
    </location>
</feature>
<feature type="transmembrane region" description="Helical" evidence="1">
    <location>
        <begin position="198"/>
        <end position="218"/>
    </location>
</feature>
<feature type="transmembrane region" description="Helical" evidence="1">
    <location>
        <begin position="236"/>
        <end position="256"/>
    </location>
</feature>
<reference key="1">
    <citation type="journal article" date="2002" name="DNA Res.">
        <title>Complete genomic sequence of nitrogen-fixing symbiotic bacterium Bradyrhizobium japonicum USDA110.</title>
        <authorList>
            <person name="Kaneko T."/>
            <person name="Nakamura Y."/>
            <person name="Sato S."/>
            <person name="Minamisawa K."/>
            <person name="Uchiumi T."/>
            <person name="Sasamoto S."/>
            <person name="Watanabe A."/>
            <person name="Idesawa K."/>
            <person name="Iriguchi M."/>
            <person name="Kawashima K."/>
            <person name="Kohara M."/>
            <person name="Matsumoto M."/>
            <person name="Shimpo S."/>
            <person name="Tsuruoka H."/>
            <person name="Wada T."/>
            <person name="Yamada M."/>
            <person name="Tabata S."/>
        </authorList>
    </citation>
    <scope>NUCLEOTIDE SEQUENCE [LARGE SCALE GENOMIC DNA]</scope>
    <source>
        <strain>JCM 10833 / BCRC 13528 / IAM 13628 / NBRC 14792 / USDA 110</strain>
    </source>
</reference>
<accession>Q89NW0</accession>
<protein>
    <recommendedName>
        <fullName evidence="1">C4-dicarboxylate transport protein 2</fullName>
    </recommendedName>
</protein>
<sequence length="444" mass="46922">MSATITATSATATATQKKPFYRILYVQVLAAIVLGVIVGWLWPDIGKNDWIKAMGDGFVKLIKMAIAPIIFCTVVSGIAHISEVKKVGRVAVKALVYFEVVSTFALALGLVVANVLRPGAGFQGQSNAAAVAGYAKQASEMKSVDFVLHIIPDTVVGAFAQGEILQVLLFAILFGFALMGLGERAHTVRSFVDDVAHAMFGVISIVVKVAPIGAFGAMAYTIGRYGPQALGNLAGLIATFYLTAFLFVVVGLGIIARIAGFSIFKFLKYIKDELLIVLGTSSSESALPQMMEKLEILGCSKSVVGLVVPTGYSFNLDGTNIYMTLATLFIAQAMNVDLSFGEQMTILVVAMLTSKGASGITGAGFITLAGTLAAVRPELLPGMAIVLGIDKFMSECRALTNLCGNGVACVVVAWWEGELDREKLRVALDRNVDPTDLEVAVTTG</sequence>
<dbReference type="EMBL" id="BA000040">
    <property type="protein sequence ID" value="BAC48988.1"/>
    <property type="molecule type" value="Genomic_DNA"/>
</dbReference>
<dbReference type="RefSeq" id="NP_770363.1">
    <property type="nucleotide sequence ID" value="NC_004463.1"/>
</dbReference>
<dbReference type="RefSeq" id="WP_011086504.1">
    <property type="nucleotide sequence ID" value="NC_004463.1"/>
</dbReference>
<dbReference type="SMR" id="Q89NW0"/>
<dbReference type="STRING" id="224911.AAV28_15585"/>
<dbReference type="EnsemblBacteria" id="BAC48988">
    <property type="protein sequence ID" value="BAC48988"/>
    <property type="gene ID" value="BAC48988"/>
</dbReference>
<dbReference type="GeneID" id="46490727"/>
<dbReference type="KEGG" id="bja:blr3723"/>
<dbReference type="PATRIC" id="fig|224911.44.peg.3386"/>
<dbReference type="eggNOG" id="COG1301">
    <property type="taxonomic scope" value="Bacteria"/>
</dbReference>
<dbReference type="HOGENOM" id="CLU_019375_7_0_5"/>
<dbReference type="InParanoid" id="Q89NW0"/>
<dbReference type="OrthoDB" id="9766690at2"/>
<dbReference type="PhylomeDB" id="Q89NW0"/>
<dbReference type="Proteomes" id="UP000002526">
    <property type="component" value="Chromosome"/>
</dbReference>
<dbReference type="GO" id="GO:0005886">
    <property type="term" value="C:plasma membrane"/>
    <property type="evidence" value="ECO:0000318"/>
    <property type="project" value="GO_Central"/>
</dbReference>
<dbReference type="GO" id="GO:0015138">
    <property type="term" value="F:fumarate transmembrane transporter activity"/>
    <property type="evidence" value="ECO:0000318"/>
    <property type="project" value="GO_Central"/>
</dbReference>
<dbReference type="GO" id="GO:0015366">
    <property type="term" value="F:malate:proton symporter activity"/>
    <property type="evidence" value="ECO:0000318"/>
    <property type="project" value="GO_Central"/>
</dbReference>
<dbReference type="GO" id="GO:0015141">
    <property type="term" value="F:succinate transmembrane transporter activity"/>
    <property type="evidence" value="ECO:0000318"/>
    <property type="project" value="GO_Central"/>
</dbReference>
<dbReference type="GO" id="GO:0070778">
    <property type="term" value="P:L-aspartate transmembrane transport"/>
    <property type="evidence" value="ECO:0000318"/>
    <property type="project" value="GO_Central"/>
</dbReference>
<dbReference type="FunFam" id="1.10.3860.10:FF:000001">
    <property type="entry name" value="C4-dicarboxylate transport protein"/>
    <property type="match status" value="1"/>
</dbReference>
<dbReference type="Gene3D" id="1.10.3860.10">
    <property type="entry name" value="Sodium:dicarboxylate symporter"/>
    <property type="match status" value="1"/>
</dbReference>
<dbReference type="HAMAP" id="MF_01300">
    <property type="entry name" value="C4_dicarb_transport"/>
    <property type="match status" value="1"/>
</dbReference>
<dbReference type="InterPro" id="IPR023954">
    <property type="entry name" value="C4_dicarb_transport"/>
</dbReference>
<dbReference type="InterPro" id="IPR001991">
    <property type="entry name" value="Na-dicarboxylate_symporter"/>
</dbReference>
<dbReference type="InterPro" id="IPR018107">
    <property type="entry name" value="Na-dicarboxylate_symporter_CS"/>
</dbReference>
<dbReference type="InterPro" id="IPR036458">
    <property type="entry name" value="Na:dicarbo_symporter_sf"/>
</dbReference>
<dbReference type="NCBIfam" id="NF002461">
    <property type="entry name" value="PRK01663.1"/>
    <property type="match status" value="1"/>
</dbReference>
<dbReference type="PANTHER" id="PTHR42865:SF1">
    <property type="entry name" value="AEROBIC C4-DICARBOXYLATE TRANSPORT PROTEIN"/>
    <property type="match status" value="1"/>
</dbReference>
<dbReference type="PANTHER" id="PTHR42865">
    <property type="entry name" value="PROTON/GLUTAMATE-ASPARTATE SYMPORTER"/>
    <property type="match status" value="1"/>
</dbReference>
<dbReference type="Pfam" id="PF00375">
    <property type="entry name" value="SDF"/>
    <property type="match status" value="1"/>
</dbReference>
<dbReference type="PRINTS" id="PR00173">
    <property type="entry name" value="EDTRNSPORT"/>
</dbReference>
<dbReference type="SUPFAM" id="SSF118215">
    <property type="entry name" value="Proton glutamate symport protein"/>
    <property type="match status" value="1"/>
</dbReference>
<dbReference type="PROSITE" id="PS00714">
    <property type="entry name" value="NA_DICARBOXYL_SYMP_2"/>
    <property type="match status" value="1"/>
</dbReference>
<name>DCTA2_BRADU</name>
<proteinExistence type="inferred from homology"/>